<accession>P31449</accession>
<accession>Q2M7Z3</accession>
<comment type="sequence caution" evidence="2">
    <conflict type="erroneous initiation">
        <sequence resource="EMBL-CDS" id="AAA62032"/>
    </conflict>
</comment>
<comment type="sequence caution" evidence="2">
    <conflict type="erroneous initiation">
        <sequence resource="EMBL-CDS" id="BAE77613"/>
    </conflict>
</comment>
<sequence>MNGKLQSSDVKNETPYNIPLLINENVISSGISLISLWHTYADEHYRVIWPRDKKKPLIANSWVAVYTVQGCGKILLKNGEQITLHGNCIIFLKPMDIHSYHCEGLVWEQYWMEFTPTSMMDIPVGQQSVIYNGEIYNQELTEVAELITSPEAIKNNLAVAFLTKIIYQWICLMYADGKKDPQRRQIEKLIATLHASLQQRWSVADMAATIPCSEAWLRRLFLRYTGKTPKEYYLDARLDLALSLLKQQGNSVGEVADTLNFFDSFHFSKAFKHKFGYAPSAVLKNTDQHPTDASPHN</sequence>
<reference key="1">
    <citation type="journal article" date="1993" name="Genomics">
        <title>DNA sequence and analysis of 136 kilobases of the Escherichia coli genome: organizational symmetry around the origin of replication.</title>
        <authorList>
            <person name="Burland V.D."/>
            <person name="Plunkett G. III"/>
            <person name="Daniels D.L."/>
            <person name="Blattner F.R."/>
        </authorList>
    </citation>
    <scope>NUCLEOTIDE SEQUENCE [LARGE SCALE GENOMIC DNA]</scope>
    <source>
        <strain>K12 / MG1655 / ATCC 47076</strain>
    </source>
</reference>
<reference key="2">
    <citation type="journal article" date="1997" name="Science">
        <title>The complete genome sequence of Escherichia coli K-12.</title>
        <authorList>
            <person name="Blattner F.R."/>
            <person name="Plunkett G. III"/>
            <person name="Bloch C.A."/>
            <person name="Perna N.T."/>
            <person name="Burland V."/>
            <person name="Riley M."/>
            <person name="Collado-Vides J."/>
            <person name="Glasner J.D."/>
            <person name="Rode C.K."/>
            <person name="Mayhew G.F."/>
            <person name="Gregor J."/>
            <person name="Davis N.W."/>
            <person name="Kirkpatrick H.A."/>
            <person name="Goeden M.A."/>
            <person name="Rose D.J."/>
            <person name="Mau B."/>
            <person name="Shao Y."/>
        </authorList>
    </citation>
    <scope>NUCLEOTIDE SEQUENCE [LARGE SCALE GENOMIC DNA]</scope>
    <source>
        <strain>K12 / MG1655 / ATCC 47076</strain>
    </source>
</reference>
<reference key="3">
    <citation type="journal article" date="2006" name="Mol. Syst. Biol.">
        <title>Highly accurate genome sequences of Escherichia coli K-12 strains MG1655 and W3110.</title>
        <authorList>
            <person name="Hayashi K."/>
            <person name="Morooka N."/>
            <person name="Yamamoto Y."/>
            <person name="Fujita K."/>
            <person name="Isono K."/>
            <person name="Choi S."/>
            <person name="Ohtsubo E."/>
            <person name="Baba T."/>
            <person name="Wanner B.L."/>
            <person name="Mori H."/>
            <person name="Horiuchi T."/>
        </authorList>
    </citation>
    <scope>NUCLEOTIDE SEQUENCE [LARGE SCALE GENOMIC DNA]</scope>
    <source>
        <strain>K12 / W3110 / ATCC 27325 / DSM 5911</strain>
    </source>
</reference>
<feature type="chain" id="PRO_0000194615" description="Uncharacterized HTH-type transcriptional regulator YidL">
    <location>
        <begin position="1"/>
        <end position="297"/>
    </location>
</feature>
<feature type="domain" description="HTH araC/xylS-type" evidence="1">
    <location>
        <begin position="187"/>
        <end position="285"/>
    </location>
</feature>
<feature type="DNA-binding region" description="H-T-H motif" evidence="1">
    <location>
        <begin position="204"/>
        <end position="225"/>
    </location>
</feature>
<feature type="DNA-binding region" description="H-T-H motif" evidence="1">
    <location>
        <begin position="252"/>
        <end position="275"/>
    </location>
</feature>
<dbReference type="EMBL" id="L10328">
    <property type="protein sequence ID" value="AAA62032.1"/>
    <property type="status" value="ALT_INIT"/>
    <property type="molecule type" value="Genomic_DNA"/>
</dbReference>
<dbReference type="EMBL" id="U00096">
    <property type="protein sequence ID" value="AAC76703.2"/>
    <property type="molecule type" value="Genomic_DNA"/>
</dbReference>
<dbReference type="EMBL" id="AP009048">
    <property type="protein sequence ID" value="BAE77613.1"/>
    <property type="status" value="ALT_INIT"/>
    <property type="molecule type" value="Genomic_DNA"/>
</dbReference>
<dbReference type="PIR" id="A65170">
    <property type="entry name" value="A65170"/>
</dbReference>
<dbReference type="RefSeq" id="NP_418136.2">
    <property type="nucleotide sequence ID" value="NC_000913.3"/>
</dbReference>
<dbReference type="RefSeq" id="WP_001013540.1">
    <property type="nucleotide sequence ID" value="NZ_STEB01000015.1"/>
</dbReference>
<dbReference type="SMR" id="P31449"/>
<dbReference type="BioGRID" id="4262588">
    <property type="interactions" value="115"/>
</dbReference>
<dbReference type="BioGRID" id="852492">
    <property type="interactions" value="1"/>
</dbReference>
<dbReference type="FunCoup" id="P31449">
    <property type="interactions" value="11"/>
</dbReference>
<dbReference type="IntAct" id="P31449">
    <property type="interactions" value="10"/>
</dbReference>
<dbReference type="STRING" id="511145.b3680"/>
<dbReference type="PaxDb" id="511145-b3680"/>
<dbReference type="EnsemblBacteria" id="AAC76703">
    <property type="protein sequence ID" value="AAC76703"/>
    <property type="gene ID" value="b3680"/>
</dbReference>
<dbReference type="GeneID" id="948186"/>
<dbReference type="KEGG" id="ecj:JW3656"/>
<dbReference type="KEGG" id="eco:b3680"/>
<dbReference type="KEGG" id="ecoc:C3026_19955"/>
<dbReference type="PATRIC" id="fig|511145.12.peg.3801"/>
<dbReference type="EchoBASE" id="EB1658"/>
<dbReference type="eggNOG" id="COG2207">
    <property type="taxonomic scope" value="Bacteria"/>
</dbReference>
<dbReference type="HOGENOM" id="CLU_072016_0_0_6"/>
<dbReference type="InParanoid" id="P31449"/>
<dbReference type="OMA" id="YQWICLI"/>
<dbReference type="OrthoDB" id="6057514at2"/>
<dbReference type="BioCyc" id="EcoCyc:EG11707-MONOMER"/>
<dbReference type="PRO" id="PR:P31449"/>
<dbReference type="Proteomes" id="UP000000625">
    <property type="component" value="Chromosome"/>
</dbReference>
<dbReference type="GO" id="GO:0003700">
    <property type="term" value="F:DNA-binding transcription factor activity"/>
    <property type="evidence" value="ECO:0007669"/>
    <property type="project" value="InterPro"/>
</dbReference>
<dbReference type="GO" id="GO:0043565">
    <property type="term" value="F:sequence-specific DNA binding"/>
    <property type="evidence" value="ECO:0007669"/>
    <property type="project" value="InterPro"/>
</dbReference>
<dbReference type="FunFam" id="1.10.10.60:FF:000276">
    <property type="entry name" value="Transcriptional regulator, AraC family"/>
    <property type="match status" value="1"/>
</dbReference>
<dbReference type="FunFam" id="2.60.120.280:FF:000002">
    <property type="entry name" value="Transcriptional regulator, AraC family"/>
    <property type="match status" value="1"/>
</dbReference>
<dbReference type="Gene3D" id="1.10.10.60">
    <property type="entry name" value="Homeodomain-like"/>
    <property type="match status" value="1"/>
</dbReference>
<dbReference type="Gene3D" id="2.60.120.280">
    <property type="entry name" value="Regulatory protein AraC"/>
    <property type="match status" value="1"/>
</dbReference>
<dbReference type="InterPro" id="IPR003313">
    <property type="entry name" value="AraC-bd"/>
</dbReference>
<dbReference type="InterPro" id="IPR009057">
    <property type="entry name" value="Homeodomain-like_sf"/>
</dbReference>
<dbReference type="InterPro" id="IPR037923">
    <property type="entry name" value="HTH-like"/>
</dbReference>
<dbReference type="InterPro" id="IPR018060">
    <property type="entry name" value="HTH_AraC"/>
</dbReference>
<dbReference type="InterPro" id="IPR018062">
    <property type="entry name" value="HTH_AraC-typ_CS"/>
</dbReference>
<dbReference type="PANTHER" id="PTHR43280">
    <property type="entry name" value="ARAC-FAMILY TRANSCRIPTIONAL REGULATOR"/>
    <property type="match status" value="1"/>
</dbReference>
<dbReference type="PANTHER" id="PTHR43280:SF31">
    <property type="entry name" value="TRANSCRIPTIONAL REGULATORY PROTEIN"/>
    <property type="match status" value="1"/>
</dbReference>
<dbReference type="Pfam" id="PF02311">
    <property type="entry name" value="AraC_binding"/>
    <property type="match status" value="1"/>
</dbReference>
<dbReference type="Pfam" id="PF12833">
    <property type="entry name" value="HTH_18"/>
    <property type="match status" value="1"/>
</dbReference>
<dbReference type="SMART" id="SM00342">
    <property type="entry name" value="HTH_ARAC"/>
    <property type="match status" value="1"/>
</dbReference>
<dbReference type="SUPFAM" id="SSF46689">
    <property type="entry name" value="Homeodomain-like"/>
    <property type="match status" value="2"/>
</dbReference>
<dbReference type="SUPFAM" id="SSF51215">
    <property type="entry name" value="Regulatory protein AraC"/>
    <property type="match status" value="1"/>
</dbReference>
<dbReference type="PROSITE" id="PS00041">
    <property type="entry name" value="HTH_ARAC_FAMILY_1"/>
    <property type="match status" value="1"/>
</dbReference>
<dbReference type="PROSITE" id="PS01124">
    <property type="entry name" value="HTH_ARAC_FAMILY_2"/>
    <property type="match status" value="1"/>
</dbReference>
<evidence type="ECO:0000255" key="1">
    <source>
        <dbReference type="PROSITE-ProRule" id="PRU00593"/>
    </source>
</evidence>
<evidence type="ECO:0000305" key="2"/>
<gene>
    <name type="primary">yidL</name>
    <name type="ordered locus">b3680</name>
    <name type="ordered locus">JW3656</name>
</gene>
<protein>
    <recommendedName>
        <fullName>Uncharacterized HTH-type transcriptional regulator YidL</fullName>
    </recommendedName>
</protein>
<keyword id="KW-0238">DNA-binding</keyword>
<keyword id="KW-1185">Reference proteome</keyword>
<keyword id="KW-0804">Transcription</keyword>
<keyword id="KW-0805">Transcription regulation</keyword>
<organism>
    <name type="scientific">Escherichia coli (strain K12)</name>
    <dbReference type="NCBI Taxonomy" id="83333"/>
    <lineage>
        <taxon>Bacteria</taxon>
        <taxon>Pseudomonadati</taxon>
        <taxon>Pseudomonadota</taxon>
        <taxon>Gammaproteobacteria</taxon>
        <taxon>Enterobacterales</taxon>
        <taxon>Enterobacteriaceae</taxon>
        <taxon>Escherichia</taxon>
    </lineage>
</organism>
<proteinExistence type="predicted"/>
<name>YIDL_ECOLI</name>